<sequence length="77" mass="8513">MADVLERVTKIIVDRLGVEETEVVPAASFKEDLGADSLDVVELVMQLEDEFEMEISDEDAEKIATVGDAVTYIESHL</sequence>
<comment type="function">
    <text evidence="1">Carrier of the growing fatty acid chain in fatty acid biosynthesis.</text>
</comment>
<comment type="pathway">
    <text evidence="1">Lipid metabolism; fatty acid biosynthesis.</text>
</comment>
<comment type="subcellular location">
    <subcellularLocation>
        <location evidence="1">Cytoplasm</location>
    </subcellularLocation>
</comment>
<comment type="PTM">
    <text evidence="1">4'-phosphopantetheine is transferred from CoA to a specific serine of apo-ACP by AcpS. This modification is essential for activity because fatty acids are bound in thioester linkage to the sulfhydryl of the prosthetic group.</text>
</comment>
<comment type="similarity">
    <text evidence="1">Belongs to the acyl carrier protein (ACP) family.</text>
</comment>
<organism>
    <name type="scientific">Bacillus cereus (strain AH187)</name>
    <dbReference type="NCBI Taxonomy" id="405534"/>
    <lineage>
        <taxon>Bacteria</taxon>
        <taxon>Bacillati</taxon>
        <taxon>Bacillota</taxon>
        <taxon>Bacilli</taxon>
        <taxon>Bacillales</taxon>
        <taxon>Bacillaceae</taxon>
        <taxon>Bacillus</taxon>
        <taxon>Bacillus cereus group</taxon>
    </lineage>
</organism>
<keyword id="KW-0963">Cytoplasm</keyword>
<keyword id="KW-0275">Fatty acid biosynthesis</keyword>
<keyword id="KW-0276">Fatty acid metabolism</keyword>
<keyword id="KW-0444">Lipid biosynthesis</keyword>
<keyword id="KW-0443">Lipid metabolism</keyword>
<keyword id="KW-0596">Phosphopantetheine</keyword>
<keyword id="KW-0597">Phosphoprotein</keyword>
<accession>B7HLI3</accession>
<reference key="1">
    <citation type="submission" date="2008-10" db="EMBL/GenBank/DDBJ databases">
        <title>Genome sequence of Bacillus cereus AH187.</title>
        <authorList>
            <person name="Dodson R.J."/>
            <person name="Durkin A.S."/>
            <person name="Rosovitz M.J."/>
            <person name="Rasko D.A."/>
            <person name="Kolsto A.B."/>
            <person name="Okstad O.A."/>
            <person name="Ravel J."/>
            <person name="Sutton G."/>
        </authorList>
    </citation>
    <scope>NUCLEOTIDE SEQUENCE [LARGE SCALE GENOMIC DNA]</scope>
    <source>
        <strain>AH187</strain>
    </source>
</reference>
<dbReference type="EMBL" id="CP001177">
    <property type="protein sequence ID" value="ACJ80069.1"/>
    <property type="molecule type" value="Genomic_DNA"/>
</dbReference>
<dbReference type="SMR" id="B7HLI3"/>
<dbReference type="KEGG" id="bcr:BCAH187_A3898"/>
<dbReference type="HOGENOM" id="CLU_108696_5_3_9"/>
<dbReference type="UniPathway" id="UPA00094"/>
<dbReference type="Proteomes" id="UP000002214">
    <property type="component" value="Chromosome"/>
</dbReference>
<dbReference type="GO" id="GO:0005829">
    <property type="term" value="C:cytosol"/>
    <property type="evidence" value="ECO:0007669"/>
    <property type="project" value="TreeGrafter"/>
</dbReference>
<dbReference type="GO" id="GO:0016020">
    <property type="term" value="C:membrane"/>
    <property type="evidence" value="ECO:0007669"/>
    <property type="project" value="GOC"/>
</dbReference>
<dbReference type="GO" id="GO:0000035">
    <property type="term" value="F:acyl binding"/>
    <property type="evidence" value="ECO:0007669"/>
    <property type="project" value="TreeGrafter"/>
</dbReference>
<dbReference type="GO" id="GO:0000036">
    <property type="term" value="F:acyl carrier activity"/>
    <property type="evidence" value="ECO:0007669"/>
    <property type="project" value="UniProtKB-UniRule"/>
</dbReference>
<dbReference type="GO" id="GO:0009245">
    <property type="term" value="P:lipid A biosynthetic process"/>
    <property type="evidence" value="ECO:0007669"/>
    <property type="project" value="TreeGrafter"/>
</dbReference>
<dbReference type="FunFam" id="1.10.1200.10:FF:000001">
    <property type="entry name" value="Acyl carrier protein"/>
    <property type="match status" value="1"/>
</dbReference>
<dbReference type="Gene3D" id="1.10.1200.10">
    <property type="entry name" value="ACP-like"/>
    <property type="match status" value="1"/>
</dbReference>
<dbReference type="HAMAP" id="MF_01217">
    <property type="entry name" value="Acyl_carrier"/>
    <property type="match status" value="1"/>
</dbReference>
<dbReference type="InterPro" id="IPR003231">
    <property type="entry name" value="ACP"/>
</dbReference>
<dbReference type="InterPro" id="IPR036736">
    <property type="entry name" value="ACP-like_sf"/>
</dbReference>
<dbReference type="InterPro" id="IPR009081">
    <property type="entry name" value="PP-bd_ACP"/>
</dbReference>
<dbReference type="InterPro" id="IPR006162">
    <property type="entry name" value="Ppantetheine_attach_site"/>
</dbReference>
<dbReference type="NCBIfam" id="TIGR00517">
    <property type="entry name" value="acyl_carrier"/>
    <property type="match status" value="1"/>
</dbReference>
<dbReference type="NCBIfam" id="NF002148">
    <property type="entry name" value="PRK00982.1-2"/>
    <property type="match status" value="1"/>
</dbReference>
<dbReference type="NCBIfam" id="NF002149">
    <property type="entry name" value="PRK00982.1-3"/>
    <property type="match status" value="1"/>
</dbReference>
<dbReference type="NCBIfam" id="NF002150">
    <property type="entry name" value="PRK00982.1-4"/>
    <property type="match status" value="1"/>
</dbReference>
<dbReference type="NCBIfam" id="NF002151">
    <property type="entry name" value="PRK00982.1-5"/>
    <property type="match status" value="1"/>
</dbReference>
<dbReference type="PANTHER" id="PTHR20863">
    <property type="entry name" value="ACYL CARRIER PROTEIN"/>
    <property type="match status" value="1"/>
</dbReference>
<dbReference type="PANTHER" id="PTHR20863:SF76">
    <property type="entry name" value="CARRIER DOMAIN-CONTAINING PROTEIN"/>
    <property type="match status" value="1"/>
</dbReference>
<dbReference type="Pfam" id="PF00550">
    <property type="entry name" value="PP-binding"/>
    <property type="match status" value="1"/>
</dbReference>
<dbReference type="SUPFAM" id="SSF47336">
    <property type="entry name" value="ACP-like"/>
    <property type="match status" value="1"/>
</dbReference>
<dbReference type="PROSITE" id="PS50075">
    <property type="entry name" value="CARRIER"/>
    <property type="match status" value="1"/>
</dbReference>
<dbReference type="PROSITE" id="PS00012">
    <property type="entry name" value="PHOSPHOPANTETHEINE"/>
    <property type="match status" value="1"/>
</dbReference>
<proteinExistence type="inferred from homology"/>
<evidence type="ECO:0000255" key="1">
    <source>
        <dbReference type="HAMAP-Rule" id="MF_01217"/>
    </source>
</evidence>
<evidence type="ECO:0000255" key="2">
    <source>
        <dbReference type="PROSITE-ProRule" id="PRU00258"/>
    </source>
</evidence>
<name>ACP_BACC7</name>
<protein>
    <recommendedName>
        <fullName evidence="1">Acyl carrier protein</fullName>
        <shortName evidence="1">ACP</shortName>
    </recommendedName>
</protein>
<gene>
    <name evidence="1" type="primary">acpP</name>
    <name type="ordered locus">BCAH187_A3898</name>
</gene>
<feature type="chain" id="PRO_1000139001" description="Acyl carrier protein">
    <location>
        <begin position="1"/>
        <end position="77"/>
    </location>
</feature>
<feature type="domain" description="Carrier" evidence="2">
    <location>
        <begin position="2"/>
        <end position="77"/>
    </location>
</feature>
<feature type="modified residue" description="O-(pantetheine 4'-phosphoryl)serine" evidence="2">
    <location>
        <position position="37"/>
    </location>
</feature>